<accession>B0K8N3</accession>
<protein>
    <recommendedName>
        <fullName evidence="1">GTPase Der</fullName>
    </recommendedName>
    <alternativeName>
        <fullName evidence="1">GTP-binding protein EngA</fullName>
    </alternativeName>
</protein>
<name>DER_THEP3</name>
<organism>
    <name type="scientific">Thermoanaerobacter pseudethanolicus (strain ATCC 33223 / 39E)</name>
    <name type="common">Clostridium thermohydrosulfuricum</name>
    <dbReference type="NCBI Taxonomy" id="340099"/>
    <lineage>
        <taxon>Bacteria</taxon>
        <taxon>Bacillati</taxon>
        <taxon>Bacillota</taxon>
        <taxon>Clostridia</taxon>
        <taxon>Thermoanaerobacterales</taxon>
        <taxon>Thermoanaerobacteraceae</taxon>
        <taxon>Thermoanaerobacter</taxon>
    </lineage>
</organism>
<feature type="chain" id="PRO_1000099172" description="GTPase Der">
    <location>
        <begin position="1"/>
        <end position="439"/>
    </location>
</feature>
<feature type="domain" description="EngA-type G 1">
    <location>
        <begin position="4"/>
        <end position="169"/>
    </location>
</feature>
<feature type="domain" description="EngA-type G 2">
    <location>
        <begin position="177"/>
        <end position="352"/>
    </location>
</feature>
<feature type="domain" description="KH-like" evidence="1">
    <location>
        <begin position="353"/>
        <end position="437"/>
    </location>
</feature>
<feature type="binding site" evidence="1">
    <location>
        <begin position="10"/>
        <end position="17"/>
    </location>
    <ligand>
        <name>GTP</name>
        <dbReference type="ChEBI" id="CHEBI:37565"/>
        <label>1</label>
    </ligand>
</feature>
<feature type="binding site" evidence="1">
    <location>
        <begin position="57"/>
        <end position="61"/>
    </location>
    <ligand>
        <name>GTP</name>
        <dbReference type="ChEBI" id="CHEBI:37565"/>
        <label>1</label>
    </ligand>
</feature>
<feature type="binding site" evidence="1">
    <location>
        <begin position="120"/>
        <end position="123"/>
    </location>
    <ligand>
        <name>GTP</name>
        <dbReference type="ChEBI" id="CHEBI:37565"/>
        <label>1</label>
    </ligand>
</feature>
<feature type="binding site" evidence="1">
    <location>
        <begin position="183"/>
        <end position="190"/>
    </location>
    <ligand>
        <name>GTP</name>
        <dbReference type="ChEBI" id="CHEBI:37565"/>
        <label>2</label>
    </ligand>
</feature>
<feature type="binding site" evidence="1">
    <location>
        <begin position="230"/>
        <end position="234"/>
    </location>
    <ligand>
        <name>GTP</name>
        <dbReference type="ChEBI" id="CHEBI:37565"/>
        <label>2</label>
    </ligand>
</feature>
<feature type="binding site" evidence="1">
    <location>
        <begin position="295"/>
        <end position="298"/>
    </location>
    <ligand>
        <name>GTP</name>
        <dbReference type="ChEBI" id="CHEBI:37565"/>
        <label>2</label>
    </ligand>
</feature>
<proteinExistence type="inferred from homology"/>
<comment type="function">
    <text evidence="1">GTPase that plays an essential role in the late steps of ribosome biogenesis.</text>
</comment>
<comment type="subunit">
    <text evidence="1">Associates with the 50S ribosomal subunit.</text>
</comment>
<comment type="similarity">
    <text evidence="1">Belongs to the TRAFAC class TrmE-Era-EngA-EngB-Septin-like GTPase superfamily. EngA (Der) GTPase family.</text>
</comment>
<keyword id="KW-0342">GTP-binding</keyword>
<keyword id="KW-0547">Nucleotide-binding</keyword>
<keyword id="KW-1185">Reference proteome</keyword>
<keyword id="KW-0677">Repeat</keyword>
<keyword id="KW-0690">Ribosome biogenesis</keyword>
<dbReference type="EMBL" id="CP000924">
    <property type="protein sequence ID" value="ABY94496.1"/>
    <property type="molecule type" value="Genomic_DNA"/>
</dbReference>
<dbReference type="RefSeq" id="WP_003867955.1">
    <property type="nucleotide sequence ID" value="NC_010321.1"/>
</dbReference>
<dbReference type="SMR" id="B0K8N3"/>
<dbReference type="STRING" id="340099.Teth39_0839"/>
<dbReference type="KEGG" id="tpd:Teth39_0839"/>
<dbReference type="eggNOG" id="COG1160">
    <property type="taxonomic scope" value="Bacteria"/>
</dbReference>
<dbReference type="HOGENOM" id="CLU_016077_6_2_9"/>
<dbReference type="Proteomes" id="UP000002156">
    <property type="component" value="Chromosome"/>
</dbReference>
<dbReference type="GO" id="GO:0005525">
    <property type="term" value="F:GTP binding"/>
    <property type="evidence" value="ECO:0007669"/>
    <property type="project" value="UniProtKB-UniRule"/>
</dbReference>
<dbReference type="GO" id="GO:0043022">
    <property type="term" value="F:ribosome binding"/>
    <property type="evidence" value="ECO:0007669"/>
    <property type="project" value="TreeGrafter"/>
</dbReference>
<dbReference type="GO" id="GO:0042254">
    <property type="term" value="P:ribosome biogenesis"/>
    <property type="evidence" value="ECO:0007669"/>
    <property type="project" value="UniProtKB-KW"/>
</dbReference>
<dbReference type="CDD" id="cd01894">
    <property type="entry name" value="EngA1"/>
    <property type="match status" value="1"/>
</dbReference>
<dbReference type="CDD" id="cd01895">
    <property type="entry name" value="EngA2"/>
    <property type="match status" value="1"/>
</dbReference>
<dbReference type="FunFam" id="3.30.300.20:FF:000004">
    <property type="entry name" value="GTPase Der"/>
    <property type="match status" value="1"/>
</dbReference>
<dbReference type="FunFam" id="3.40.50.300:FF:000040">
    <property type="entry name" value="GTPase Der"/>
    <property type="match status" value="1"/>
</dbReference>
<dbReference type="FunFam" id="3.40.50.300:FF:000057">
    <property type="entry name" value="GTPase Der"/>
    <property type="match status" value="1"/>
</dbReference>
<dbReference type="Gene3D" id="3.30.300.20">
    <property type="match status" value="1"/>
</dbReference>
<dbReference type="Gene3D" id="3.40.50.300">
    <property type="entry name" value="P-loop containing nucleotide triphosphate hydrolases"/>
    <property type="match status" value="2"/>
</dbReference>
<dbReference type="HAMAP" id="MF_00195">
    <property type="entry name" value="GTPase_Der"/>
    <property type="match status" value="1"/>
</dbReference>
<dbReference type="InterPro" id="IPR031166">
    <property type="entry name" value="G_ENGA"/>
</dbReference>
<dbReference type="InterPro" id="IPR006073">
    <property type="entry name" value="GTP-bd"/>
</dbReference>
<dbReference type="InterPro" id="IPR016484">
    <property type="entry name" value="GTPase_Der"/>
</dbReference>
<dbReference type="InterPro" id="IPR032859">
    <property type="entry name" value="KH_dom-like"/>
</dbReference>
<dbReference type="InterPro" id="IPR015946">
    <property type="entry name" value="KH_dom-like_a/b"/>
</dbReference>
<dbReference type="InterPro" id="IPR027417">
    <property type="entry name" value="P-loop_NTPase"/>
</dbReference>
<dbReference type="InterPro" id="IPR005225">
    <property type="entry name" value="Small_GTP-bd"/>
</dbReference>
<dbReference type="NCBIfam" id="TIGR03594">
    <property type="entry name" value="GTPase_EngA"/>
    <property type="match status" value="1"/>
</dbReference>
<dbReference type="NCBIfam" id="TIGR00231">
    <property type="entry name" value="small_GTP"/>
    <property type="match status" value="2"/>
</dbReference>
<dbReference type="PANTHER" id="PTHR43834">
    <property type="entry name" value="GTPASE DER"/>
    <property type="match status" value="1"/>
</dbReference>
<dbReference type="PANTHER" id="PTHR43834:SF6">
    <property type="entry name" value="GTPASE DER"/>
    <property type="match status" value="1"/>
</dbReference>
<dbReference type="Pfam" id="PF14714">
    <property type="entry name" value="KH_dom-like"/>
    <property type="match status" value="1"/>
</dbReference>
<dbReference type="Pfam" id="PF01926">
    <property type="entry name" value="MMR_HSR1"/>
    <property type="match status" value="2"/>
</dbReference>
<dbReference type="PIRSF" id="PIRSF006485">
    <property type="entry name" value="GTP-binding_EngA"/>
    <property type="match status" value="1"/>
</dbReference>
<dbReference type="PRINTS" id="PR00326">
    <property type="entry name" value="GTP1OBG"/>
</dbReference>
<dbReference type="SUPFAM" id="SSF52540">
    <property type="entry name" value="P-loop containing nucleoside triphosphate hydrolases"/>
    <property type="match status" value="2"/>
</dbReference>
<dbReference type="PROSITE" id="PS51712">
    <property type="entry name" value="G_ENGA"/>
    <property type="match status" value="2"/>
</dbReference>
<evidence type="ECO:0000255" key="1">
    <source>
        <dbReference type="HAMAP-Rule" id="MF_00195"/>
    </source>
</evidence>
<sequence length="439" mass="49053">MAGAMVSIVGRPNVGKSTLFNKIMGKRISIVEDKPGVTRDRIYGNVEWLDKKFILVDTGGLDPNAEDILFSKVRLQVEAAIDASDVILFLVDAKEGLMPEDEEIANILRRAKKEVILVCNKVDSFKEMPPTYYDFFSLGLGNPIPISASNGLGIGELLDEVVKKLPQEELEYTEETIKIAVIGKPNVGKSSLVNKILGEERVIVSNIPGTTRDAIDTPFSKDGKNYVLIDTAGIRRKSRISESIERYSVLRALAAIERSDICLLMIDATEGPTEQDTKIAGYAFENGKGIIIVVNKWDAIKKDNNTVNEYTKMVREKLSFISFAPILFISAKTGQRVHRVLETVDKVWEEYNKRITTGLLNNVLNEAMLMFPPPADKGKPLKVYYTSQVGIKPPSFVVFVNEPELMHFSYLRFIENTLRQNFGFEGVPVVISTRKRGEN</sequence>
<reference key="1">
    <citation type="submission" date="2008-01" db="EMBL/GenBank/DDBJ databases">
        <title>Complete sequence of Thermoanaerobacter pseudethanolicus 39E.</title>
        <authorList>
            <person name="Copeland A."/>
            <person name="Lucas S."/>
            <person name="Lapidus A."/>
            <person name="Barry K."/>
            <person name="Glavina del Rio T."/>
            <person name="Dalin E."/>
            <person name="Tice H."/>
            <person name="Pitluck S."/>
            <person name="Bruce D."/>
            <person name="Goodwin L."/>
            <person name="Saunders E."/>
            <person name="Brettin T."/>
            <person name="Detter J.C."/>
            <person name="Han C."/>
            <person name="Schmutz J."/>
            <person name="Larimer F."/>
            <person name="Land M."/>
            <person name="Hauser L."/>
            <person name="Kyrpides N."/>
            <person name="Lykidis A."/>
            <person name="Hemme C."/>
            <person name="Fields M.W."/>
            <person name="He Z."/>
            <person name="Zhou J."/>
            <person name="Richardson P."/>
        </authorList>
    </citation>
    <scope>NUCLEOTIDE SEQUENCE [LARGE SCALE GENOMIC DNA]</scope>
    <source>
        <strain>ATCC 33223 / DSM 2355 / 39E</strain>
    </source>
</reference>
<gene>
    <name evidence="1" type="primary">der</name>
    <name type="synonym">engA</name>
    <name type="ordered locus">Teth39_0839</name>
</gene>